<accession>Q92BT1</accession>
<comment type="function">
    <text evidence="1">H(+)-stimulated, divalent metal cation uptake system.</text>
</comment>
<comment type="subcellular location">
    <subcellularLocation>
        <location evidence="1">Cell membrane</location>
        <topology evidence="1">Multi-pass membrane protein</topology>
    </subcellularLocation>
</comment>
<comment type="similarity">
    <text evidence="1">Belongs to the NRAMP family.</text>
</comment>
<proteinExistence type="inferred from homology"/>
<reference key="1">
    <citation type="journal article" date="2001" name="Science">
        <title>Comparative genomics of Listeria species.</title>
        <authorList>
            <person name="Glaser P."/>
            <person name="Frangeul L."/>
            <person name="Buchrieser C."/>
            <person name="Rusniok C."/>
            <person name="Amend A."/>
            <person name="Baquero F."/>
            <person name="Berche P."/>
            <person name="Bloecker H."/>
            <person name="Brandt P."/>
            <person name="Chakraborty T."/>
            <person name="Charbit A."/>
            <person name="Chetouani F."/>
            <person name="Couve E."/>
            <person name="de Daruvar A."/>
            <person name="Dehoux P."/>
            <person name="Domann E."/>
            <person name="Dominguez-Bernal G."/>
            <person name="Duchaud E."/>
            <person name="Durant L."/>
            <person name="Dussurget O."/>
            <person name="Entian K.-D."/>
            <person name="Fsihi H."/>
            <person name="Garcia-del Portillo F."/>
            <person name="Garrido P."/>
            <person name="Gautier L."/>
            <person name="Goebel W."/>
            <person name="Gomez-Lopez N."/>
            <person name="Hain T."/>
            <person name="Hauf J."/>
            <person name="Jackson D."/>
            <person name="Jones L.-M."/>
            <person name="Kaerst U."/>
            <person name="Kreft J."/>
            <person name="Kuhn M."/>
            <person name="Kunst F."/>
            <person name="Kurapkat G."/>
            <person name="Madueno E."/>
            <person name="Maitournam A."/>
            <person name="Mata Vicente J."/>
            <person name="Ng E."/>
            <person name="Nedjari H."/>
            <person name="Nordsiek G."/>
            <person name="Novella S."/>
            <person name="de Pablos B."/>
            <person name="Perez-Diaz J.-C."/>
            <person name="Purcell R."/>
            <person name="Remmel B."/>
            <person name="Rose M."/>
            <person name="Schlueter T."/>
            <person name="Simoes N."/>
            <person name="Tierrez A."/>
            <person name="Vazquez-Boland J.-A."/>
            <person name="Voss H."/>
            <person name="Wehland J."/>
            <person name="Cossart P."/>
        </authorList>
    </citation>
    <scope>NUCLEOTIDE SEQUENCE [LARGE SCALE GENOMIC DNA]</scope>
    <source>
        <strain>ATCC BAA-680 / CLIP 11262</strain>
    </source>
</reference>
<feature type="chain" id="PRO_0000212622" description="Divalent metal cation transporter MntH">
    <location>
        <begin position="1"/>
        <end position="448"/>
    </location>
</feature>
<feature type="transmembrane region" description="Helical" evidence="1">
    <location>
        <begin position="41"/>
        <end position="61"/>
    </location>
</feature>
<feature type="transmembrane region" description="Helical" evidence="1">
    <location>
        <begin position="69"/>
        <end position="89"/>
    </location>
</feature>
<feature type="transmembrane region" description="Helical" evidence="1">
    <location>
        <begin position="117"/>
        <end position="137"/>
    </location>
</feature>
<feature type="transmembrane region" description="Helical" evidence="1">
    <location>
        <begin position="147"/>
        <end position="167"/>
    </location>
</feature>
<feature type="transmembrane region" description="Helical" evidence="1">
    <location>
        <begin position="176"/>
        <end position="196"/>
    </location>
</feature>
<feature type="transmembrane region" description="Helical" evidence="1">
    <location>
        <begin position="215"/>
        <end position="235"/>
    </location>
</feature>
<feature type="transmembrane region" description="Helical" evidence="1">
    <location>
        <begin position="270"/>
        <end position="290"/>
    </location>
</feature>
<feature type="transmembrane region" description="Helical" evidence="1">
    <location>
        <begin position="307"/>
        <end position="327"/>
    </location>
</feature>
<feature type="transmembrane region" description="Helical" evidence="1">
    <location>
        <begin position="363"/>
        <end position="383"/>
    </location>
</feature>
<feature type="transmembrane region" description="Helical" evidence="1">
    <location>
        <begin position="384"/>
        <end position="404"/>
    </location>
</feature>
<feature type="transmembrane region" description="Helical" evidence="1">
    <location>
        <begin position="424"/>
        <end position="444"/>
    </location>
</feature>
<gene>
    <name evidence="1" type="primary">mntH</name>
    <name type="ordered locus">lin1463</name>
</gene>
<name>MNTH_LISIN</name>
<evidence type="ECO:0000255" key="1">
    <source>
        <dbReference type="HAMAP-Rule" id="MF_00221"/>
    </source>
</evidence>
<sequence length="448" mass="48701">MKKEKTERTKQSWRKAQNAPSLSEVNNSVAIPKNAKFFRKLFAFMGPGALIAVGYVDPGNWATSIAGGSEFGYTLLSVILISNILAVLLQSLASKLGIVTGRDLAQASSDHFSKPFGFVLWILAELAIIATDIAEVIGSAIALNLLFGIPLIWGVCITALDIFLVLFLQHKGFRYIEVIVITLMVTILVCFGAEMVMSHPDMQAIAKGFIPQSEIVTNPAMLYIALGILGATVMPHNLYLHSSIVQTRQYARTKEGKREAIRFSFIDSTFSLTIALLINASILILAAAAFYTTGQHNVAGIEDAYKLLNPTLGSSIASTVFAVALLASGQNSTLTGTLAGQIVMEGFLNIRLKPVVRRLLTRVLAIVPAVIITALYGANGINELLIFSQVILSMQLSFAVIPLVMFTSDKQKMGEFVNSPWLKIVSWSVAIFIAFLNIYLLFYTLTSL</sequence>
<protein>
    <recommendedName>
        <fullName evidence="1">Divalent metal cation transporter MntH</fullName>
    </recommendedName>
</protein>
<organism>
    <name type="scientific">Listeria innocua serovar 6a (strain ATCC BAA-680 / CLIP 11262)</name>
    <dbReference type="NCBI Taxonomy" id="272626"/>
    <lineage>
        <taxon>Bacteria</taxon>
        <taxon>Bacillati</taxon>
        <taxon>Bacillota</taxon>
        <taxon>Bacilli</taxon>
        <taxon>Bacillales</taxon>
        <taxon>Listeriaceae</taxon>
        <taxon>Listeria</taxon>
    </lineage>
</organism>
<keyword id="KW-1003">Cell membrane</keyword>
<keyword id="KW-0406">Ion transport</keyword>
<keyword id="KW-0472">Membrane</keyword>
<keyword id="KW-0769">Symport</keyword>
<keyword id="KW-0812">Transmembrane</keyword>
<keyword id="KW-1133">Transmembrane helix</keyword>
<keyword id="KW-0813">Transport</keyword>
<dbReference type="EMBL" id="AL596168">
    <property type="protein sequence ID" value="CAC96694.1"/>
    <property type="molecule type" value="Genomic_DNA"/>
</dbReference>
<dbReference type="PIR" id="AF1615">
    <property type="entry name" value="AF1615"/>
</dbReference>
<dbReference type="RefSeq" id="WP_010991546.1">
    <property type="nucleotide sequence ID" value="NC_003212.1"/>
</dbReference>
<dbReference type="SMR" id="Q92BT1"/>
<dbReference type="STRING" id="272626.gene:17565794"/>
<dbReference type="GeneID" id="93234844"/>
<dbReference type="KEGG" id="lin:lin1463"/>
<dbReference type="eggNOG" id="COG1914">
    <property type="taxonomic scope" value="Bacteria"/>
</dbReference>
<dbReference type="HOGENOM" id="CLU_020088_2_0_9"/>
<dbReference type="OrthoDB" id="9787548at2"/>
<dbReference type="Proteomes" id="UP000002513">
    <property type="component" value="Chromosome"/>
</dbReference>
<dbReference type="GO" id="GO:0005886">
    <property type="term" value="C:plasma membrane"/>
    <property type="evidence" value="ECO:0007669"/>
    <property type="project" value="UniProtKB-SubCell"/>
</dbReference>
<dbReference type="GO" id="GO:0015086">
    <property type="term" value="F:cadmium ion transmembrane transporter activity"/>
    <property type="evidence" value="ECO:0007669"/>
    <property type="project" value="TreeGrafter"/>
</dbReference>
<dbReference type="GO" id="GO:0005384">
    <property type="term" value="F:manganese ion transmembrane transporter activity"/>
    <property type="evidence" value="ECO:0007669"/>
    <property type="project" value="TreeGrafter"/>
</dbReference>
<dbReference type="GO" id="GO:0046872">
    <property type="term" value="F:metal ion binding"/>
    <property type="evidence" value="ECO:0007669"/>
    <property type="project" value="UniProtKB-UniRule"/>
</dbReference>
<dbReference type="GO" id="GO:0015293">
    <property type="term" value="F:symporter activity"/>
    <property type="evidence" value="ECO:0007669"/>
    <property type="project" value="UniProtKB-UniRule"/>
</dbReference>
<dbReference type="GO" id="GO:0034755">
    <property type="term" value="P:iron ion transmembrane transport"/>
    <property type="evidence" value="ECO:0007669"/>
    <property type="project" value="TreeGrafter"/>
</dbReference>
<dbReference type="HAMAP" id="MF_00221">
    <property type="entry name" value="NRAMP"/>
    <property type="match status" value="1"/>
</dbReference>
<dbReference type="InterPro" id="IPR001046">
    <property type="entry name" value="NRAMP_fam"/>
</dbReference>
<dbReference type="NCBIfam" id="TIGR01197">
    <property type="entry name" value="nramp"/>
    <property type="match status" value="1"/>
</dbReference>
<dbReference type="NCBIfam" id="NF037982">
    <property type="entry name" value="Nramp_1"/>
    <property type="match status" value="1"/>
</dbReference>
<dbReference type="NCBIfam" id="NF001923">
    <property type="entry name" value="PRK00701.1"/>
    <property type="match status" value="1"/>
</dbReference>
<dbReference type="PANTHER" id="PTHR11706:SF33">
    <property type="entry name" value="NATURAL RESISTANCE-ASSOCIATED MACROPHAGE PROTEIN 2"/>
    <property type="match status" value="1"/>
</dbReference>
<dbReference type="PANTHER" id="PTHR11706">
    <property type="entry name" value="SOLUTE CARRIER PROTEIN FAMILY 11 MEMBER"/>
    <property type="match status" value="1"/>
</dbReference>
<dbReference type="Pfam" id="PF01566">
    <property type="entry name" value="Nramp"/>
    <property type="match status" value="1"/>
</dbReference>
<dbReference type="PRINTS" id="PR00447">
    <property type="entry name" value="NATRESASSCMP"/>
</dbReference>